<keyword id="KW-0010">Activator</keyword>
<keyword id="KW-0217">Developmental protein</keyword>
<keyword id="KW-0238">DNA-binding</keyword>
<keyword id="KW-0306">Gastrulation</keyword>
<keyword id="KW-0539">Nucleus</keyword>
<keyword id="KW-1185">Reference proteome</keyword>
<keyword id="KW-0804">Transcription</keyword>
<keyword id="KW-0805">Transcription regulation</keyword>
<keyword id="KW-0879">Wnt signaling pathway</keyword>
<evidence type="ECO:0000250" key="1">
    <source>
        <dbReference type="UniProtKB" id="O42601"/>
    </source>
</evidence>
<evidence type="ECO:0000250" key="2">
    <source>
        <dbReference type="UniProtKB" id="Q9H6I2"/>
    </source>
</evidence>
<evidence type="ECO:0000255" key="3">
    <source>
        <dbReference type="PROSITE-ProRule" id="PRU00267"/>
    </source>
</evidence>
<evidence type="ECO:0000255" key="4">
    <source>
        <dbReference type="PROSITE-ProRule" id="PRU00849"/>
    </source>
</evidence>
<evidence type="ECO:0000305" key="5"/>
<evidence type="ECO:0000312" key="6">
    <source>
        <dbReference type="EMBL" id="AAH74512.1"/>
    </source>
</evidence>
<evidence type="ECO:0000312" key="7">
    <source>
        <dbReference type="EMBL" id="AAT71998.1"/>
    </source>
</evidence>
<sequence>MSSPDGGYASDDQFHGNCSVPIMMGQYEWTDPLTMFQDAKTKKEAGSANSRGKAEARIRRPMNAFMVWAKDERKRLAQQNPDLHNAELSKMLGKSWKSLTLASKRPFVKEAERLRVQHIQDYPDYKYRPRRKKQVKREEEGFLPSADIPGPQVMGCNAMVGQNYKMQYSGQNSQQSQITPAGYFEDHNPVGFYYRGYNVPKYYMSQNSSGYCSPPTQGEYQALSYNFNSSYIPYQQNASAPAMGKQMAVKENIIQESPEHGIMGCQVSPQMYNGQMYVPECAKTHPVAQTEQHSSLHQSQQMVTQNYLPSQQDGHLESDIDKTEFDQYLMYEPKSDTELIYTIDQDSGAYSTNLLPSLISEANSVCYYDYCGV</sequence>
<name>S17B2_XENTR</name>
<reference evidence="7" key="1">
    <citation type="submission" date="2004-07" db="EMBL/GenBank/DDBJ databases">
        <title>Sequence of Xenopus tropicalis development genes.</title>
        <authorList>
            <person name="Qin S."/>
            <person name="Dors M."/>
            <person name="Johnson E."/>
            <person name="Bloom S."/>
            <person name="Hood L."/>
            <person name="Rowen L."/>
        </authorList>
    </citation>
    <scope>NUCLEOTIDE SEQUENCE [GENOMIC DNA]</scope>
</reference>
<reference evidence="7" key="2">
    <citation type="submission" date="2004-06" db="EMBL/GenBank/DDBJ databases">
        <authorList>
            <consortium name="NIH - Xenopus Gene Collection (XGC) project"/>
        </authorList>
    </citation>
    <scope>NUCLEOTIDE SEQUENCE [LARGE SCALE MRNA]</scope>
    <source>
        <tissue evidence="6">Embryo</tissue>
    </source>
</reference>
<organism>
    <name type="scientific">Xenopus tropicalis</name>
    <name type="common">Western clawed frog</name>
    <name type="synonym">Silurana tropicalis</name>
    <dbReference type="NCBI Taxonomy" id="8364"/>
    <lineage>
        <taxon>Eukaryota</taxon>
        <taxon>Metazoa</taxon>
        <taxon>Chordata</taxon>
        <taxon>Craniata</taxon>
        <taxon>Vertebrata</taxon>
        <taxon>Euteleostomi</taxon>
        <taxon>Amphibia</taxon>
        <taxon>Batrachia</taxon>
        <taxon>Anura</taxon>
        <taxon>Pipoidea</taxon>
        <taxon>Pipidae</taxon>
        <taxon>Xenopodinae</taxon>
        <taxon>Xenopus</taxon>
        <taxon>Silurana</taxon>
    </lineage>
</organism>
<feature type="chain" id="PRO_0000382474" description="Transcription factor Sox-17-beta.2">
    <location>
        <begin position="1"/>
        <end position="373"/>
    </location>
</feature>
<feature type="domain" description="Sox C-terminal" evidence="4">
    <location>
        <begin position="256"/>
        <end position="373"/>
    </location>
</feature>
<feature type="DNA-binding region" description="HMG box" evidence="3">
    <location>
        <begin position="58"/>
        <end position="126"/>
    </location>
</feature>
<feature type="region of interest" description="Required for transcriptional activity and interaction with ctnnb1" evidence="1">
    <location>
        <begin position="324"/>
        <end position="328"/>
    </location>
</feature>
<feature type="short sequence motif" description="9aaTAD" evidence="2">
    <location>
        <begin position="323"/>
        <end position="331"/>
    </location>
</feature>
<comment type="function">
    <text evidence="1">Transcription activator. Doesn't appear to bind to the consensus 5'-AACAAT-3' DNA binding site, but binds 5'-ATTGTT-3'. All of the sox17 proteins are required for embryonic endoderm development and gastrulation movements, and show some redundancy in function. In addition, the sox17 proteins have distinct but overlapping roles in later gut development. Acts downstream of vegt-signaling in endoderm differentiation to induce a range of endodermal genes both directly and indirectly. Also represses wnt-responsive genes to inhibit wnt/beta-catenin-mediated signaling (By similarity).</text>
</comment>
<comment type="subunit">
    <text evidence="1">Interacts (via C-terminus) with ctnnb1/beta-catenin (via Armadillo repeats); this interaction is required for inhibition of wnt-signaling.</text>
</comment>
<comment type="subcellular location">
    <subcellularLocation>
        <location evidence="1 3">Nucleus</location>
    </subcellularLocation>
</comment>
<comment type="domain">
    <text evidence="2">The 9aaTAD motif is a transactivation domain present in a large number of yeast and animal transcription factors.</text>
</comment>
<comment type="sequence caution" evidence="5">
    <conflict type="erroneous initiation">
        <sequence resource="EMBL-CDS" id="AAH74512"/>
    </conflict>
</comment>
<comment type="sequence caution" evidence="5">
    <conflict type="erroneous initiation">
        <sequence resource="EMBL-CDS" id="AAT71998"/>
    </conflict>
</comment>
<gene>
    <name type="primary">sox17b.2</name>
</gene>
<protein>
    <recommendedName>
        <fullName evidence="1">Transcription factor Sox-17-beta.2</fullName>
    </recommendedName>
    <alternativeName>
        <fullName>SRY (sex determining region Y)-box 17-beta.2</fullName>
    </alternativeName>
</protein>
<accession>Q6GLH8</accession>
<proteinExistence type="evidence at transcript level"/>
<dbReference type="EMBL" id="AC148408">
    <property type="protein sequence ID" value="AAT71998.1"/>
    <property type="status" value="ALT_INIT"/>
    <property type="molecule type" value="Genomic_DNA"/>
</dbReference>
<dbReference type="EMBL" id="BC074512">
    <property type="protein sequence ID" value="AAH74512.1"/>
    <property type="status" value="ALT_INIT"/>
    <property type="molecule type" value="mRNA"/>
</dbReference>
<dbReference type="RefSeq" id="NP_001090837.1">
    <property type="nucleotide sequence ID" value="NM_001097368.1"/>
</dbReference>
<dbReference type="SMR" id="Q6GLH8"/>
<dbReference type="PaxDb" id="8364-ENSXETP00000060679"/>
<dbReference type="DNASU" id="100038235"/>
<dbReference type="GeneID" id="100038235"/>
<dbReference type="KEGG" id="xtr:100038235"/>
<dbReference type="CTD" id="100038235"/>
<dbReference type="eggNOG" id="KOG0527">
    <property type="taxonomic scope" value="Eukaryota"/>
</dbReference>
<dbReference type="InParanoid" id="Q6GLH8"/>
<dbReference type="OrthoDB" id="9882966at2759"/>
<dbReference type="Proteomes" id="UP000008143">
    <property type="component" value="Chromosome 6"/>
</dbReference>
<dbReference type="Bgee" id="ENSXETG00000026438">
    <property type="expression patterns" value="Expressed in gastrula and 22 other cell types or tissues"/>
</dbReference>
<dbReference type="GO" id="GO:0005634">
    <property type="term" value="C:nucleus"/>
    <property type="evidence" value="ECO:0007669"/>
    <property type="project" value="UniProtKB-SubCell"/>
</dbReference>
<dbReference type="GO" id="GO:0003677">
    <property type="term" value="F:DNA binding"/>
    <property type="evidence" value="ECO:0007669"/>
    <property type="project" value="UniProtKB-KW"/>
</dbReference>
<dbReference type="GO" id="GO:0007369">
    <property type="term" value="P:gastrulation"/>
    <property type="evidence" value="ECO:0007669"/>
    <property type="project" value="UniProtKB-KW"/>
</dbReference>
<dbReference type="GO" id="GO:0016055">
    <property type="term" value="P:Wnt signaling pathway"/>
    <property type="evidence" value="ECO:0007669"/>
    <property type="project" value="UniProtKB-KW"/>
</dbReference>
<dbReference type="CDD" id="cd22047">
    <property type="entry name" value="HMG-box_SoxF_SOX17"/>
    <property type="match status" value="1"/>
</dbReference>
<dbReference type="FunFam" id="1.10.30.10:FF:000008">
    <property type="entry name" value="transcription factor SOX-7"/>
    <property type="match status" value="1"/>
</dbReference>
<dbReference type="Gene3D" id="1.10.30.10">
    <property type="entry name" value="High mobility group box domain"/>
    <property type="match status" value="1"/>
</dbReference>
<dbReference type="InterPro" id="IPR009071">
    <property type="entry name" value="HMG_box_dom"/>
</dbReference>
<dbReference type="InterPro" id="IPR036910">
    <property type="entry name" value="HMG_box_dom_sf"/>
</dbReference>
<dbReference type="InterPro" id="IPR021934">
    <property type="entry name" value="Sox_C"/>
</dbReference>
<dbReference type="InterPro" id="IPR050140">
    <property type="entry name" value="SRY-related_HMG-box_TF-like"/>
</dbReference>
<dbReference type="PANTHER" id="PTHR10270">
    <property type="entry name" value="SOX TRANSCRIPTION FACTOR"/>
    <property type="match status" value="1"/>
</dbReference>
<dbReference type="PANTHER" id="PTHR10270:SF326">
    <property type="entry name" value="TRANSCRIPTION FACTOR SOX-17-BETA.3"/>
    <property type="match status" value="1"/>
</dbReference>
<dbReference type="Pfam" id="PF00505">
    <property type="entry name" value="HMG_box"/>
    <property type="match status" value="1"/>
</dbReference>
<dbReference type="SMART" id="SM00398">
    <property type="entry name" value="HMG"/>
    <property type="match status" value="1"/>
</dbReference>
<dbReference type="SUPFAM" id="SSF47095">
    <property type="entry name" value="HMG-box"/>
    <property type="match status" value="1"/>
</dbReference>
<dbReference type="PROSITE" id="PS50118">
    <property type="entry name" value="HMG_BOX_2"/>
    <property type="match status" value="1"/>
</dbReference>
<dbReference type="PROSITE" id="PS51516">
    <property type="entry name" value="SOX_C"/>
    <property type="match status" value="1"/>
</dbReference>